<comment type="similarity">
    <text evidence="1">Belongs to the FPF1 family.</text>
</comment>
<comment type="sequence caution" evidence="1">
    <conflict type="erroneous gene model prediction">
        <sequence resource="EMBL-CDS" id="BAC15985"/>
    </conflict>
</comment>
<dbReference type="EMBL" id="AP004300">
    <property type="protein sequence ID" value="BAC15985.1"/>
    <property type="status" value="ALT_SEQ"/>
    <property type="molecule type" value="Genomic_DNA"/>
</dbReference>
<dbReference type="EMBL" id="AP008213">
    <property type="protein sequence ID" value="BAF22509.2"/>
    <property type="molecule type" value="Genomic_DNA"/>
</dbReference>
<dbReference type="EMBL" id="AP014963">
    <property type="protein sequence ID" value="BAT03152.1"/>
    <property type="molecule type" value="Genomic_DNA"/>
</dbReference>
<dbReference type="EMBL" id="CM000144">
    <property type="protein sequence ID" value="EAZ41040.1"/>
    <property type="molecule type" value="Genomic_DNA"/>
</dbReference>
<dbReference type="RefSeq" id="XP_015646212.1">
    <property type="nucleotide sequence ID" value="XM_015790726.1"/>
</dbReference>
<dbReference type="FunCoup" id="A3BNA1">
    <property type="interactions" value="56"/>
</dbReference>
<dbReference type="STRING" id="39947.A3BNA1"/>
<dbReference type="PaxDb" id="39947-A3BNA1"/>
<dbReference type="EnsemblPlants" id="Os07t0671000-01">
    <property type="protein sequence ID" value="Os07t0671000-01"/>
    <property type="gene ID" value="Os07g0671000"/>
</dbReference>
<dbReference type="Gramene" id="Os07t0671000-01">
    <property type="protein sequence ID" value="Os07t0671000-01"/>
    <property type="gene ID" value="Os07g0671000"/>
</dbReference>
<dbReference type="KEGG" id="dosa:Os07g0671000"/>
<dbReference type="eggNOG" id="ENOG502STST">
    <property type="taxonomic scope" value="Eukaryota"/>
</dbReference>
<dbReference type="HOGENOM" id="CLU_121629_0_1_1"/>
<dbReference type="InParanoid" id="A3BNA1"/>
<dbReference type="OrthoDB" id="612242at2759"/>
<dbReference type="Proteomes" id="UP000000763">
    <property type="component" value="Chromosome 7"/>
</dbReference>
<dbReference type="Proteomes" id="UP000007752">
    <property type="component" value="Chromosome 7"/>
</dbReference>
<dbReference type="Proteomes" id="UP000059680">
    <property type="component" value="Chromosome 7"/>
</dbReference>
<dbReference type="GO" id="GO:0009909">
    <property type="term" value="P:regulation of flower development"/>
    <property type="evidence" value="ECO:0007669"/>
    <property type="project" value="InterPro"/>
</dbReference>
<dbReference type="InterPro" id="IPR039274">
    <property type="entry name" value="FPF1"/>
</dbReference>
<dbReference type="PANTHER" id="PTHR33433">
    <property type="entry name" value="FLOWERING-PROMOTING FACTOR 1-LIKE PROTEIN 1"/>
    <property type="match status" value="1"/>
</dbReference>
<evidence type="ECO:0000305" key="1"/>
<accession>A3BNA1</accession>
<accession>A0A0P0XA72</accession>
<accession>Q8H475</accession>
<keyword id="KW-1185">Reference proteome</keyword>
<gene>
    <name type="ordered locus">Os07g0671000</name>
    <name type="ordered locus">LOC_Os07g47450</name>
    <name type="ORF">OsJ_25526</name>
    <name type="ORF">P0470D12.115</name>
</gene>
<organism>
    <name type="scientific">Oryza sativa subsp. japonica</name>
    <name type="common">Rice</name>
    <dbReference type="NCBI Taxonomy" id="39947"/>
    <lineage>
        <taxon>Eukaryota</taxon>
        <taxon>Viridiplantae</taxon>
        <taxon>Streptophyta</taxon>
        <taxon>Embryophyta</taxon>
        <taxon>Tracheophyta</taxon>
        <taxon>Spermatophyta</taxon>
        <taxon>Magnoliopsida</taxon>
        <taxon>Liliopsida</taxon>
        <taxon>Poales</taxon>
        <taxon>Poaceae</taxon>
        <taxon>BOP clade</taxon>
        <taxon>Oryzoideae</taxon>
        <taxon>Oryzeae</taxon>
        <taxon>Oryzinae</taxon>
        <taxon>Oryza</taxon>
        <taxon>Oryza sativa</taxon>
    </lineage>
</organism>
<sequence>MAGGGVWVFRNNGVMELEEQATSRKALVHVATSEVIRSTEALERRLGALGWERYYEDRATLQLHRRDGSADLISIPRDFSRFRSTHMYDVVVKNRDHFKVVDLHT</sequence>
<proteinExistence type="inferred from homology"/>
<protein>
    <recommendedName>
        <fullName>Flowering-promoting factor 1-like protein 5</fullName>
    </recommendedName>
    <alternativeName>
        <fullName>FPF1-like protein 5</fullName>
    </alternativeName>
</protein>
<feature type="chain" id="PRO_0000417320" description="Flowering-promoting factor 1-like protein 5">
    <location>
        <begin position="1"/>
        <end position="105"/>
    </location>
</feature>
<name>FLP5_ORYSJ</name>
<reference key="1">
    <citation type="journal article" date="2005" name="Nature">
        <title>The map-based sequence of the rice genome.</title>
        <authorList>
            <consortium name="International rice genome sequencing project (IRGSP)"/>
        </authorList>
    </citation>
    <scope>NUCLEOTIDE SEQUENCE [LARGE SCALE GENOMIC DNA]</scope>
    <source>
        <strain>cv. Nipponbare</strain>
    </source>
</reference>
<reference key="2">
    <citation type="journal article" date="2008" name="Nucleic Acids Res.">
        <title>The rice annotation project database (RAP-DB): 2008 update.</title>
        <authorList>
            <consortium name="The rice annotation project (RAP)"/>
        </authorList>
    </citation>
    <scope>GENOME REANNOTATION</scope>
    <source>
        <strain>cv. Nipponbare</strain>
    </source>
</reference>
<reference key="3">
    <citation type="journal article" date="2013" name="Rice">
        <title>Improvement of the Oryza sativa Nipponbare reference genome using next generation sequence and optical map data.</title>
        <authorList>
            <person name="Kawahara Y."/>
            <person name="de la Bastide M."/>
            <person name="Hamilton J.P."/>
            <person name="Kanamori H."/>
            <person name="McCombie W.R."/>
            <person name="Ouyang S."/>
            <person name="Schwartz D.C."/>
            <person name="Tanaka T."/>
            <person name="Wu J."/>
            <person name="Zhou S."/>
            <person name="Childs K.L."/>
            <person name="Davidson R.M."/>
            <person name="Lin H."/>
            <person name="Quesada-Ocampo L."/>
            <person name="Vaillancourt B."/>
            <person name="Sakai H."/>
            <person name="Lee S.S."/>
            <person name="Kim J."/>
            <person name="Numa H."/>
            <person name="Itoh T."/>
            <person name="Buell C.R."/>
            <person name="Matsumoto T."/>
        </authorList>
    </citation>
    <scope>GENOME REANNOTATION</scope>
    <source>
        <strain>cv. Nipponbare</strain>
    </source>
</reference>
<reference key="4">
    <citation type="journal article" date="2005" name="PLoS Biol.">
        <title>The genomes of Oryza sativa: a history of duplications.</title>
        <authorList>
            <person name="Yu J."/>
            <person name="Wang J."/>
            <person name="Lin W."/>
            <person name="Li S."/>
            <person name="Li H."/>
            <person name="Zhou J."/>
            <person name="Ni P."/>
            <person name="Dong W."/>
            <person name="Hu S."/>
            <person name="Zeng C."/>
            <person name="Zhang J."/>
            <person name="Zhang Y."/>
            <person name="Li R."/>
            <person name="Xu Z."/>
            <person name="Li S."/>
            <person name="Li X."/>
            <person name="Zheng H."/>
            <person name="Cong L."/>
            <person name="Lin L."/>
            <person name="Yin J."/>
            <person name="Geng J."/>
            <person name="Li G."/>
            <person name="Shi J."/>
            <person name="Liu J."/>
            <person name="Lv H."/>
            <person name="Li J."/>
            <person name="Wang J."/>
            <person name="Deng Y."/>
            <person name="Ran L."/>
            <person name="Shi X."/>
            <person name="Wang X."/>
            <person name="Wu Q."/>
            <person name="Li C."/>
            <person name="Ren X."/>
            <person name="Wang J."/>
            <person name="Wang X."/>
            <person name="Li D."/>
            <person name="Liu D."/>
            <person name="Zhang X."/>
            <person name="Ji Z."/>
            <person name="Zhao W."/>
            <person name="Sun Y."/>
            <person name="Zhang Z."/>
            <person name="Bao J."/>
            <person name="Han Y."/>
            <person name="Dong L."/>
            <person name="Ji J."/>
            <person name="Chen P."/>
            <person name="Wu S."/>
            <person name="Liu J."/>
            <person name="Xiao Y."/>
            <person name="Bu D."/>
            <person name="Tan J."/>
            <person name="Yang L."/>
            <person name="Ye C."/>
            <person name="Zhang J."/>
            <person name="Xu J."/>
            <person name="Zhou Y."/>
            <person name="Yu Y."/>
            <person name="Zhang B."/>
            <person name="Zhuang S."/>
            <person name="Wei H."/>
            <person name="Liu B."/>
            <person name="Lei M."/>
            <person name="Yu H."/>
            <person name="Li Y."/>
            <person name="Xu H."/>
            <person name="Wei S."/>
            <person name="He X."/>
            <person name="Fang L."/>
            <person name="Zhang Z."/>
            <person name="Zhang Y."/>
            <person name="Huang X."/>
            <person name="Su Z."/>
            <person name="Tong W."/>
            <person name="Li J."/>
            <person name="Tong Z."/>
            <person name="Li S."/>
            <person name="Ye J."/>
            <person name="Wang L."/>
            <person name="Fang L."/>
            <person name="Lei T."/>
            <person name="Chen C.-S."/>
            <person name="Chen H.-C."/>
            <person name="Xu Z."/>
            <person name="Li H."/>
            <person name="Huang H."/>
            <person name="Zhang F."/>
            <person name="Xu H."/>
            <person name="Li N."/>
            <person name="Zhao C."/>
            <person name="Li S."/>
            <person name="Dong L."/>
            <person name="Huang Y."/>
            <person name="Li L."/>
            <person name="Xi Y."/>
            <person name="Qi Q."/>
            <person name="Li W."/>
            <person name="Zhang B."/>
            <person name="Hu W."/>
            <person name="Zhang Y."/>
            <person name="Tian X."/>
            <person name="Jiao Y."/>
            <person name="Liang X."/>
            <person name="Jin J."/>
            <person name="Gao L."/>
            <person name="Zheng W."/>
            <person name="Hao B."/>
            <person name="Liu S.-M."/>
            <person name="Wang W."/>
            <person name="Yuan L."/>
            <person name="Cao M."/>
            <person name="McDermott J."/>
            <person name="Samudrala R."/>
            <person name="Wang J."/>
            <person name="Wong G.K.-S."/>
            <person name="Yang H."/>
        </authorList>
    </citation>
    <scope>NUCLEOTIDE SEQUENCE [LARGE SCALE GENOMIC DNA]</scope>
    <source>
        <strain>cv. Nipponbare</strain>
    </source>
</reference>